<sequence>MSSYQQKQTFTPPPQLQQQQVKQPSQPPPQEIFVPTTKEPCHSKVPQPGNTKIPEPGCTKVPEPGCTKVPEPGCTKVPEPGCTKVPEPGCTKVPEPGCTKVPEPGYTKVPEPGSIKVPDQGFIKFPEPGAIKVPEQGYTKVPVPGYTKLPEPCPSTVTPGPAQQKTKQK</sequence>
<dbReference type="EMBL" id="AF077374">
    <property type="protein sequence ID" value="AAD11938.1"/>
    <property type="molecule type" value="Genomic_DNA"/>
</dbReference>
<dbReference type="EMBL" id="AY118269">
    <property type="protein sequence ID" value="AAM74559.1"/>
    <property type="molecule type" value="mRNA"/>
</dbReference>
<dbReference type="EMBL" id="AJ243667">
    <property type="protein sequence ID" value="CAB65098.1"/>
    <property type="molecule type" value="mRNA"/>
</dbReference>
<dbReference type="EMBL" id="DQ017955">
    <property type="protein sequence ID" value="AAY26394.1"/>
    <property type="molecule type" value="Genomic_DNA"/>
</dbReference>
<dbReference type="EMBL" id="AK311823">
    <property type="protein sequence ID" value="BAG34765.1"/>
    <property type="molecule type" value="mRNA"/>
</dbReference>
<dbReference type="EMBL" id="EF553525">
    <property type="protein sequence ID" value="ABQ66270.1"/>
    <property type="molecule type" value="mRNA"/>
</dbReference>
<dbReference type="EMBL" id="AL356867">
    <property type="status" value="NOT_ANNOTATED_CDS"/>
    <property type="molecule type" value="Genomic_DNA"/>
</dbReference>
<dbReference type="EMBL" id="CH471121">
    <property type="protein sequence ID" value="EAW53353.1"/>
    <property type="molecule type" value="Genomic_DNA"/>
</dbReference>
<dbReference type="EMBL" id="CH471121">
    <property type="protein sequence ID" value="EAW53354.1"/>
    <property type="molecule type" value="Genomic_DNA"/>
</dbReference>
<dbReference type="EMBL" id="BC017802">
    <property type="protein sequence ID" value="AAH17802.1"/>
    <property type="molecule type" value="mRNA"/>
</dbReference>
<dbReference type="CCDS" id="CCDS1033.1"/>
<dbReference type="RefSeq" id="NP_001091058.1">
    <property type="nucleotide sequence ID" value="NM_001097589.2"/>
</dbReference>
<dbReference type="RefSeq" id="NP_005407.1">
    <property type="nucleotide sequence ID" value="NM_005416.3"/>
</dbReference>
<dbReference type="BioGRID" id="112585">
    <property type="interactions" value="56"/>
</dbReference>
<dbReference type="FunCoup" id="Q9UBC9">
    <property type="interactions" value="58"/>
</dbReference>
<dbReference type="IntAct" id="Q9UBC9">
    <property type="interactions" value="23"/>
</dbReference>
<dbReference type="MINT" id="Q9UBC9"/>
<dbReference type="STRING" id="9606.ENSP00000330391"/>
<dbReference type="ChEMBL" id="CHEMBL4295970"/>
<dbReference type="GlyGen" id="Q9UBC9">
    <property type="glycosylation" value="1 site"/>
</dbReference>
<dbReference type="iPTMnet" id="Q9UBC9"/>
<dbReference type="PhosphoSitePlus" id="Q9UBC9"/>
<dbReference type="BioMuta" id="SPRR3"/>
<dbReference type="jPOST" id="Q9UBC9"/>
<dbReference type="MassIVE" id="Q9UBC9"/>
<dbReference type="PaxDb" id="9606-ENSP00000330391"/>
<dbReference type="PeptideAtlas" id="Q9UBC9"/>
<dbReference type="PRIDE" id="Q9UBC9"/>
<dbReference type="ProteomicsDB" id="83944"/>
<dbReference type="Pumba" id="Q9UBC9"/>
<dbReference type="Antibodypedia" id="34110">
    <property type="antibodies" value="191 antibodies from 28 providers"/>
</dbReference>
<dbReference type="DNASU" id="6707"/>
<dbReference type="Ensembl" id="ENST00000295367.5">
    <property type="protein sequence ID" value="ENSP00000295367.4"/>
    <property type="gene ID" value="ENSG00000163209.15"/>
</dbReference>
<dbReference type="Ensembl" id="ENST00000331860.7">
    <property type="protein sequence ID" value="ENSP00000330391.3"/>
    <property type="gene ID" value="ENSG00000163209.15"/>
</dbReference>
<dbReference type="GeneID" id="6707"/>
<dbReference type="KEGG" id="hsa:6707"/>
<dbReference type="MANE-Select" id="ENST00000295367.5">
    <property type="protein sequence ID" value="ENSP00000295367.4"/>
    <property type="RefSeq nucleotide sequence ID" value="NM_001097589.2"/>
    <property type="RefSeq protein sequence ID" value="NP_001091058.1"/>
</dbReference>
<dbReference type="UCSC" id="uc001fax.5">
    <property type="organism name" value="human"/>
</dbReference>
<dbReference type="AGR" id="HGNC:11268"/>
<dbReference type="CTD" id="6707"/>
<dbReference type="DisGeNET" id="6707"/>
<dbReference type="GeneCards" id="SPRR3"/>
<dbReference type="HGNC" id="HGNC:11268">
    <property type="gene designation" value="SPRR3"/>
</dbReference>
<dbReference type="HPA" id="ENSG00000163209">
    <property type="expression patterns" value="Tissue enhanced (cervix, esophagus, vagina)"/>
</dbReference>
<dbReference type="MIM" id="182271">
    <property type="type" value="gene"/>
</dbReference>
<dbReference type="neXtProt" id="NX_Q9UBC9"/>
<dbReference type="OpenTargets" id="ENSG00000163209"/>
<dbReference type="PharmGKB" id="PA36097"/>
<dbReference type="VEuPathDB" id="HostDB:ENSG00000163209"/>
<dbReference type="eggNOG" id="ENOG502SDIP">
    <property type="taxonomic scope" value="Eukaryota"/>
</dbReference>
<dbReference type="GeneTree" id="ENSGT00940000164092"/>
<dbReference type="HOGENOM" id="CLU_101829_1_0_1"/>
<dbReference type="InParanoid" id="Q9UBC9"/>
<dbReference type="OMA" id="QVPEPCQ"/>
<dbReference type="OrthoDB" id="9623740at2759"/>
<dbReference type="PAN-GO" id="Q9UBC9">
    <property type="GO annotations" value="0 GO annotations based on evolutionary models"/>
</dbReference>
<dbReference type="PhylomeDB" id="Q9UBC9"/>
<dbReference type="TreeFam" id="TF338205"/>
<dbReference type="PathwayCommons" id="Q9UBC9"/>
<dbReference type="Reactome" id="R-HSA-6809371">
    <property type="pathway name" value="Formation of the cornified envelope"/>
</dbReference>
<dbReference type="SignaLink" id="Q9UBC9"/>
<dbReference type="BioGRID-ORCS" id="6707">
    <property type="hits" value="9 hits in 1135 CRISPR screens"/>
</dbReference>
<dbReference type="ChiTaRS" id="SPRR3">
    <property type="organism name" value="human"/>
</dbReference>
<dbReference type="GeneWiki" id="SPRR3"/>
<dbReference type="GenomeRNAi" id="6707"/>
<dbReference type="Pharos" id="Q9UBC9">
    <property type="development level" value="Tbio"/>
</dbReference>
<dbReference type="PRO" id="PR:Q9UBC9"/>
<dbReference type="Proteomes" id="UP000005640">
    <property type="component" value="Chromosome 1"/>
</dbReference>
<dbReference type="RNAct" id="Q9UBC9">
    <property type="molecule type" value="protein"/>
</dbReference>
<dbReference type="Bgee" id="ENSG00000163209">
    <property type="expression patterns" value="Expressed in lower esophagus mucosa and 110 other cell types or tissues"/>
</dbReference>
<dbReference type="ExpressionAtlas" id="Q9UBC9">
    <property type="expression patterns" value="baseline and differential"/>
</dbReference>
<dbReference type="GO" id="GO:0001533">
    <property type="term" value="C:cornified envelope"/>
    <property type="evidence" value="ECO:0000304"/>
    <property type="project" value="Reactome"/>
</dbReference>
<dbReference type="GO" id="GO:0005829">
    <property type="term" value="C:cytosol"/>
    <property type="evidence" value="ECO:0000304"/>
    <property type="project" value="Reactome"/>
</dbReference>
<dbReference type="GO" id="GO:0070062">
    <property type="term" value="C:extracellular exosome"/>
    <property type="evidence" value="ECO:0007005"/>
    <property type="project" value="UniProtKB"/>
</dbReference>
<dbReference type="GO" id="GO:0005794">
    <property type="term" value="C:Golgi apparatus"/>
    <property type="evidence" value="ECO:0000314"/>
    <property type="project" value="BHF-UCL"/>
</dbReference>
<dbReference type="GO" id="GO:0048471">
    <property type="term" value="C:perinuclear region of cytoplasm"/>
    <property type="evidence" value="ECO:0000314"/>
    <property type="project" value="BHF-UCL"/>
</dbReference>
<dbReference type="GO" id="GO:0005198">
    <property type="term" value="F:structural molecule activity"/>
    <property type="evidence" value="ECO:0000304"/>
    <property type="project" value="UniProtKB"/>
</dbReference>
<dbReference type="GO" id="GO:0008544">
    <property type="term" value="P:epidermis development"/>
    <property type="evidence" value="ECO:0000303"/>
    <property type="project" value="UniProtKB"/>
</dbReference>
<dbReference type="GO" id="GO:0031424">
    <property type="term" value="P:keratinization"/>
    <property type="evidence" value="ECO:0007669"/>
    <property type="project" value="UniProtKB-KW"/>
</dbReference>
<dbReference type="GO" id="GO:0030216">
    <property type="term" value="P:keratinocyte differentiation"/>
    <property type="evidence" value="ECO:0000303"/>
    <property type="project" value="UniProtKB"/>
</dbReference>
<dbReference type="GO" id="GO:0042060">
    <property type="term" value="P:wound healing"/>
    <property type="evidence" value="ECO:0000304"/>
    <property type="project" value="UniProtKB"/>
</dbReference>
<dbReference type="Pfam" id="PF02389">
    <property type="entry name" value="Cornifin"/>
    <property type="match status" value="2"/>
</dbReference>
<dbReference type="PRINTS" id="PR00021">
    <property type="entry name" value="PRORICH"/>
</dbReference>
<gene>
    <name type="primary">SPRR3</name>
    <name type="synonym">SPRC</name>
</gene>
<organism>
    <name type="scientific">Homo sapiens</name>
    <name type="common">Human</name>
    <dbReference type="NCBI Taxonomy" id="9606"/>
    <lineage>
        <taxon>Eukaryota</taxon>
        <taxon>Metazoa</taxon>
        <taxon>Chordata</taxon>
        <taxon>Craniata</taxon>
        <taxon>Vertebrata</taxon>
        <taxon>Euteleostomi</taxon>
        <taxon>Mammalia</taxon>
        <taxon>Eutheria</taxon>
        <taxon>Euarchontoglires</taxon>
        <taxon>Primates</taxon>
        <taxon>Haplorrhini</taxon>
        <taxon>Catarrhini</taxon>
        <taxon>Hominidae</taxon>
        <taxon>Homo</taxon>
    </lineage>
</organism>
<protein>
    <recommendedName>
        <fullName>Small proline-rich protein 3</fullName>
    </recommendedName>
    <alternativeName>
        <fullName>22 kDa pancornulin</fullName>
    </alternativeName>
    <alternativeName>
        <fullName>Cornifin beta</fullName>
    </alternativeName>
    <alternativeName>
        <fullName>Esophagin</fullName>
    </alternativeName>
</protein>
<name>SPRR3_HUMAN</name>
<keyword id="KW-0007">Acetylation</keyword>
<keyword id="KW-0963">Cytoplasm</keyword>
<keyword id="KW-0903">Direct protein sequencing</keyword>
<keyword id="KW-0417">Keratinization</keyword>
<keyword id="KW-1267">Proteomics identification</keyword>
<keyword id="KW-1185">Reference proteome</keyword>
<keyword id="KW-0677">Repeat</keyword>
<comment type="function">
    <text>Cross-linked envelope protein of keratinocytes.</text>
</comment>
<comment type="interaction">
    <interactant intactId="EBI-355179">
        <id>Q9UBC9</id>
    </interactant>
    <interactant intactId="EBI-12205593">
        <id>Q8TAC2</id>
        <label>JOSD2</label>
    </interactant>
    <organismsDiffer>false</organismsDiffer>
    <experiments>2</experiments>
</comment>
<comment type="subcellular location">
    <subcellularLocation>
        <location>Cytoplasm</location>
    </subcellularLocation>
</comment>
<comment type="induction">
    <text>During squamous differentiation of epidermal keratinocytes.</text>
</comment>
<comment type="mass spectrometry">
    <text>Variants Del 98-Cys--Pro-105 and Val-149.</text>
</comment>
<comment type="mass spectrometry"/>
<comment type="similarity">
    <text evidence="5">Belongs to the cornifin (SPRR) family.</text>
</comment>
<feature type="initiator methionine" description="Removed" evidence="3">
    <location>
        <position position="1"/>
    </location>
</feature>
<feature type="chain" id="PRO_0000150003" description="Small proline-rich protein 3">
    <location>
        <begin position="2"/>
        <end position="169"/>
    </location>
</feature>
<feature type="repeat" description="1">
    <location>
        <begin position="43"/>
        <end position="50"/>
    </location>
</feature>
<feature type="repeat" description="2">
    <location>
        <begin position="51"/>
        <end position="58"/>
    </location>
</feature>
<feature type="repeat" description="3">
    <location>
        <begin position="59"/>
        <end position="66"/>
    </location>
</feature>
<feature type="repeat" description="4">
    <location>
        <begin position="67"/>
        <end position="74"/>
    </location>
</feature>
<feature type="repeat" description="5">
    <location>
        <begin position="75"/>
        <end position="82"/>
    </location>
</feature>
<feature type="repeat" description="6">
    <location>
        <begin position="83"/>
        <end position="90"/>
    </location>
</feature>
<feature type="repeat" description="7">
    <location>
        <begin position="91"/>
        <end position="98"/>
    </location>
</feature>
<feature type="repeat" description="8">
    <location>
        <begin position="99"/>
        <end position="106"/>
    </location>
</feature>
<feature type="repeat" description="9">
    <location>
        <begin position="107"/>
        <end position="114"/>
    </location>
</feature>
<feature type="repeat" description="10">
    <location>
        <begin position="115"/>
        <end position="122"/>
    </location>
</feature>
<feature type="repeat" description="11">
    <location>
        <begin position="123"/>
        <end position="130"/>
    </location>
</feature>
<feature type="repeat" description="12">
    <location>
        <begin position="131"/>
        <end position="138"/>
    </location>
</feature>
<feature type="repeat" description="13">
    <location>
        <begin position="139"/>
        <end position="146"/>
    </location>
</feature>
<feature type="repeat" description="14">
    <location>
        <begin position="147"/>
        <end position="154"/>
    </location>
</feature>
<feature type="region of interest" description="Disordered" evidence="1">
    <location>
        <begin position="1"/>
        <end position="57"/>
    </location>
</feature>
<feature type="region of interest" description="14 X 8 AA approximate tandem repeats">
    <location>
        <begin position="43"/>
        <end position="154"/>
    </location>
</feature>
<feature type="region of interest" description="Disordered" evidence="1">
    <location>
        <begin position="150"/>
        <end position="169"/>
    </location>
</feature>
<feature type="compositionally biased region" description="Low complexity" evidence="1">
    <location>
        <begin position="1"/>
        <end position="24"/>
    </location>
</feature>
<feature type="compositionally biased region" description="Polar residues" evidence="1">
    <location>
        <begin position="155"/>
        <end position="169"/>
    </location>
</feature>
<feature type="modified residue" description="N-acetylserine" evidence="3">
    <location>
        <position position="2"/>
    </location>
</feature>
<feature type="sequence variant" id="VAR_065255" evidence="3">
    <location>
        <begin position="98"/>
        <end position="105"/>
    </location>
</feature>
<feature type="sequence variant" id="VAR_023377" description="In dbSNP:rs1055935." evidence="2 3 4">
    <original>L</original>
    <variation>V</variation>
    <location>
        <position position="149"/>
    </location>
</feature>
<feature type="sequence variant" id="VAR_053048" description="In dbSNP:rs2075740.">
    <original>T</original>
    <variation>M</variation>
    <location>
        <position position="156"/>
    </location>
</feature>
<feature type="sequence conflict" description="In Ref. 3; AAM74559." evidence="5" ref="3">
    <original>Q</original>
    <variation>H</variation>
    <location>
        <position position="19"/>
    </location>
</feature>
<feature type="sequence conflict" description="In Ref. 2; no nucleotide entry, 4; CAB65098 and 9; AAH17802." evidence="5" ref="2 4 9">
    <location>
        <begin position="61"/>
        <end position="68"/>
    </location>
</feature>
<proteinExistence type="evidence at protein level"/>
<evidence type="ECO:0000256" key="1">
    <source>
        <dbReference type="SAM" id="MobiDB-lite"/>
    </source>
</evidence>
<evidence type="ECO:0000269" key="2">
    <source>
    </source>
</evidence>
<evidence type="ECO:0000269" key="3">
    <source>
    </source>
</evidence>
<evidence type="ECO:0000269" key="4">
    <source ref="6"/>
</evidence>
<evidence type="ECO:0000305" key="5"/>
<reference key="1">
    <citation type="journal article" date="1993" name="Genomics">
        <title>Molecular characterization and evolution of the SPRR family of keratinocyte differentiation markers encoding small proline-rich proteins.</title>
        <authorList>
            <person name="Gibbs S."/>
            <person name="Fijneman R."/>
            <person name="Wiegant J."/>
            <person name="Geurts van Kessel A."/>
            <person name="van de Putte P."/>
            <person name="Backendorf C."/>
        </authorList>
    </citation>
    <scope>NUCLEOTIDE SEQUENCE [GENOMIC DNA]</scope>
    <source>
        <tissue>Peripheral blood</tissue>
    </source>
</reference>
<reference key="2">
    <citation type="journal article" date="1994" name="Arch. Oral Biol.">
        <title>Differential expression of protease inhibitor and small proline-rich protein genes between normal human oral tissue and odontogenic keratocysts.</title>
        <authorList>
            <person name="Robinson P.A."/>
            <person name="Marley J.J."/>
            <person name="High A.S."/>
            <person name="Hume W.J."/>
        </authorList>
    </citation>
    <scope>NUCLEOTIDE SEQUENCE [MRNA]</scope>
</reference>
<reference key="3">
    <citation type="journal article" date="1996" name="Cell Growth Differ.">
        <title>Esophagin cDNA cloning and characterization: a tissue-specific member of the small proline-rich protein family that is not expressed in esophageal tumors.</title>
        <authorList>
            <person name="Abraham J.M."/>
            <person name="Wang S."/>
            <person name="Suzuki H."/>
            <person name="Jiang H.Y."/>
            <person name="Rosenblum-Vos L.S."/>
            <person name="Yin J."/>
            <person name="Meltzer S.J."/>
        </authorList>
    </citation>
    <scope>NUCLEOTIDE SEQUENCE [MRNA]</scope>
</reference>
<reference key="4">
    <citation type="journal article" date="2001" name="Genome Res.">
        <title>Identification of human epidermal differentiation complex (EDC)-encoded genes by subtractive hybridization of entire YACs to a gridded keratinocyte cDNA library.</title>
        <authorList>
            <person name="Marenholz I."/>
            <person name="Zirra M."/>
            <person name="Fischer D.F."/>
            <person name="Backendorf C."/>
            <person name="Ziegler A."/>
            <person name="Mischke D."/>
        </authorList>
    </citation>
    <scope>NUCLEOTIDE SEQUENCE [MRNA]</scope>
</reference>
<reference key="5">
    <citation type="journal article" date="2010" name="Biochem. Biophys. Res. Commun.">
        <title>Characterization of two isoforms of human SPRR3 from saliva of preterm human newborn and autoptic fetal oral mucosa, parotid and submandibular gland samples.</title>
        <authorList>
            <person name="Manconi B."/>
            <person name="Cabras T."/>
            <person name="Pisano E."/>
            <person name="Nemolato S."/>
            <person name="Inzitari R."/>
            <person name="Iavarone F."/>
            <person name="Fanali C."/>
            <person name="Sanna M.T."/>
            <person name="Tirone C."/>
            <person name="Vento G."/>
            <person name="Romagnoli C."/>
            <person name="Faa G."/>
            <person name="Castagnola M."/>
            <person name="Messana I."/>
        </authorList>
    </citation>
    <scope>NUCLEOTIDE SEQUENCE [MRNA]</scope>
    <scope>MASS SPECTROMETRY</scope>
    <scope>CLEAVAGE OF INITIATOR METHIONINE</scope>
    <scope>ACETYLATION AT SER-2</scope>
    <scope>VARIANTS 98-CYS--GLY-105 DEL AND VAL-149</scope>
    <source>
        <tissue>Oral mucosa</tissue>
        <tissue>Parotid gland</tissue>
        <tissue>Saliva</tissue>
        <tissue>Submandibular gland</tissue>
    </source>
</reference>
<reference key="6">
    <citation type="submission" date="2005-04" db="EMBL/GenBank/DDBJ databases">
        <authorList>
            <consortium name="NIEHS SNPs program"/>
        </authorList>
    </citation>
    <scope>NUCLEOTIDE SEQUENCE [GENOMIC DNA]</scope>
    <scope>VARIANT VAL-149</scope>
</reference>
<reference key="7">
    <citation type="journal article" date="2004" name="Nat. Genet.">
        <title>Complete sequencing and characterization of 21,243 full-length human cDNAs.</title>
        <authorList>
            <person name="Ota T."/>
            <person name="Suzuki Y."/>
            <person name="Nishikawa T."/>
            <person name="Otsuki T."/>
            <person name="Sugiyama T."/>
            <person name="Irie R."/>
            <person name="Wakamatsu A."/>
            <person name="Hayashi K."/>
            <person name="Sato H."/>
            <person name="Nagai K."/>
            <person name="Kimura K."/>
            <person name="Makita H."/>
            <person name="Sekine M."/>
            <person name="Obayashi M."/>
            <person name="Nishi T."/>
            <person name="Shibahara T."/>
            <person name="Tanaka T."/>
            <person name="Ishii S."/>
            <person name="Yamamoto J."/>
            <person name="Saito K."/>
            <person name="Kawai Y."/>
            <person name="Isono Y."/>
            <person name="Nakamura Y."/>
            <person name="Nagahari K."/>
            <person name="Murakami K."/>
            <person name="Yasuda T."/>
            <person name="Iwayanagi T."/>
            <person name="Wagatsuma M."/>
            <person name="Shiratori A."/>
            <person name="Sudo H."/>
            <person name="Hosoiri T."/>
            <person name="Kaku Y."/>
            <person name="Kodaira H."/>
            <person name="Kondo H."/>
            <person name="Sugawara M."/>
            <person name="Takahashi M."/>
            <person name="Kanda K."/>
            <person name="Yokoi T."/>
            <person name="Furuya T."/>
            <person name="Kikkawa E."/>
            <person name="Omura Y."/>
            <person name="Abe K."/>
            <person name="Kamihara K."/>
            <person name="Katsuta N."/>
            <person name="Sato K."/>
            <person name="Tanikawa M."/>
            <person name="Yamazaki M."/>
            <person name="Ninomiya K."/>
            <person name="Ishibashi T."/>
            <person name="Yamashita H."/>
            <person name="Murakawa K."/>
            <person name="Fujimori K."/>
            <person name="Tanai H."/>
            <person name="Kimata M."/>
            <person name="Watanabe M."/>
            <person name="Hiraoka S."/>
            <person name="Chiba Y."/>
            <person name="Ishida S."/>
            <person name="Ono Y."/>
            <person name="Takiguchi S."/>
            <person name="Watanabe S."/>
            <person name="Yosida M."/>
            <person name="Hotuta T."/>
            <person name="Kusano J."/>
            <person name="Kanehori K."/>
            <person name="Takahashi-Fujii A."/>
            <person name="Hara H."/>
            <person name="Tanase T.-O."/>
            <person name="Nomura Y."/>
            <person name="Togiya S."/>
            <person name="Komai F."/>
            <person name="Hara R."/>
            <person name="Takeuchi K."/>
            <person name="Arita M."/>
            <person name="Imose N."/>
            <person name="Musashino K."/>
            <person name="Yuuki H."/>
            <person name="Oshima A."/>
            <person name="Sasaki N."/>
            <person name="Aotsuka S."/>
            <person name="Yoshikawa Y."/>
            <person name="Matsunawa H."/>
            <person name="Ichihara T."/>
            <person name="Shiohata N."/>
            <person name="Sano S."/>
            <person name="Moriya S."/>
            <person name="Momiyama H."/>
            <person name="Satoh N."/>
            <person name="Takami S."/>
            <person name="Terashima Y."/>
            <person name="Suzuki O."/>
            <person name="Nakagawa S."/>
            <person name="Senoh A."/>
            <person name="Mizoguchi H."/>
            <person name="Goto Y."/>
            <person name="Shimizu F."/>
            <person name="Wakebe H."/>
            <person name="Hishigaki H."/>
            <person name="Watanabe T."/>
            <person name="Sugiyama A."/>
            <person name="Takemoto M."/>
            <person name="Kawakami B."/>
            <person name="Yamazaki M."/>
            <person name="Watanabe K."/>
            <person name="Kumagai A."/>
            <person name="Itakura S."/>
            <person name="Fukuzumi Y."/>
            <person name="Fujimori Y."/>
            <person name="Komiyama M."/>
            <person name="Tashiro H."/>
            <person name="Tanigami A."/>
            <person name="Fujiwara T."/>
            <person name="Ono T."/>
            <person name="Yamada K."/>
            <person name="Fujii Y."/>
            <person name="Ozaki K."/>
            <person name="Hirao M."/>
            <person name="Ohmori Y."/>
            <person name="Kawabata A."/>
            <person name="Hikiji T."/>
            <person name="Kobatake N."/>
            <person name="Inagaki H."/>
            <person name="Ikema Y."/>
            <person name="Okamoto S."/>
            <person name="Okitani R."/>
            <person name="Kawakami T."/>
            <person name="Noguchi S."/>
            <person name="Itoh T."/>
            <person name="Shigeta K."/>
            <person name="Senba T."/>
            <person name="Matsumura K."/>
            <person name="Nakajima Y."/>
            <person name="Mizuno T."/>
            <person name="Morinaga M."/>
            <person name="Sasaki M."/>
            <person name="Togashi T."/>
            <person name="Oyama M."/>
            <person name="Hata H."/>
            <person name="Watanabe M."/>
            <person name="Komatsu T."/>
            <person name="Mizushima-Sugano J."/>
            <person name="Satoh T."/>
            <person name="Shirai Y."/>
            <person name="Takahashi Y."/>
            <person name="Nakagawa K."/>
            <person name="Okumura K."/>
            <person name="Nagase T."/>
            <person name="Nomura N."/>
            <person name="Kikuchi H."/>
            <person name="Masuho Y."/>
            <person name="Yamashita R."/>
            <person name="Nakai K."/>
            <person name="Yada T."/>
            <person name="Nakamura Y."/>
            <person name="Ohara O."/>
            <person name="Isogai T."/>
            <person name="Sugano S."/>
        </authorList>
    </citation>
    <scope>NUCLEOTIDE SEQUENCE [LARGE SCALE MRNA]</scope>
    <source>
        <tissue>Tongue</tissue>
    </source>
</reference>
<reference key="8">
    <citation type="journal article" date="2007" name="BMC Genomics">
        <title>The full-ORF clone resource of the German cDNA consortium.</title>
        <authorList>
            <person name="Bechtel S."/>
            <person name="Rosenfelder H."/>
            <person name="Duda A."/>
            <person name="Schmidt C.P."/>
            <person name="Ernst U."/>
            <person name="Wellenreuther R."/>
            <person name="Mehrle A."/>
            <person name="Schuster C."/>
            <person name="Bahr A."/>
            <person name="Bloecker H."/>
            <person name="Heubner D."/>
            <person name="Hoerlein A."/>
            <person name="Michel G."/>
            <person name="Wedler H."/>
            <person name="Koehrer K."/>
            <person name="Ottenwaelder B."/>
            <person name="Poustka A."/>
            <person name="Wiemann S."/>
            <person name="Schupp I."/>
        </authorList>
    </citation>
    <scope>NUCLEOTIDE SEQUENCE [LARGE SCALE MRNA]</scope>
    <source>
        <tissue>Retina</tissue>
    </source>
</reference>
<reference key="9">
    <citation type="journal article" date="2006" name="Nature">
        <title>The DNA sequence and biological annotation of human chromosome 1.</title>
        <authorList>
            <person name="Gregory S.G."/>
            <person name="Barlow K.F."/>
            <person name="McLay K.E."/>
            <person name="Kaul R."/>
            <person name="Swarbreck D."/>
            <person name="Dunham A."/>
            <person name="Scott C.E."/>
            <person name="Howe K.L."/>
            <person name="Woodfine K."/>
            <person name="Spencer C.C.A."/>
            <person name="Jones M.C."/>
            <person name="Gillson C."/>
            <person name="Searle S."/>
            <person name="Zhou Y."/>
            <person name="Kokocinski F."/>
            <person name="McDonald L."/>
            <person name="Evans R."/>
            <person name="Phillips K."/>
            <person name="Atkinson A."/>
            <person name="Cooper R."/>
            <person name="Jones C."/>
            <person name="Hall R.E."/>
            <person name="Andrews T.D."/>
            <person name="Lloyd C."/>
            <person name="Ainscough R."/>
            <person name="Almeida J.P."/>
            <person name="Ambrose K.D."/>
            <person name="Anderson F."/>
            <person name="Andrew R.W."/>
            <person name="Ashwell R.I.S."/>
            <person name="Aubin K."/>
            <person name="Babbage A.K."/>
            <person name="Bagguley C.L."/>
            <person name="Bailey J."/>
            <person name="Beasley H."/>
            <person name="Bethel G."/>
            <person name="Bird C.P."/>
            <person name="Bray-Allen S."/>
            <person name="Brown J.Y."/>
            <person name="Brown A.J."/>
            <person name="Buckley D."/>
            <person name="Burton J."/>
            <person name="Bye J."/>
            <person name="Carder C."/>
            <person name="Chapman J.C."/>
            <person name="Clark S.Y."/>
            <person name="Clarke G."/>
            <person name="Clee C."/>
            <person name="Cobley V."/>
            <person name="Collier R.E."/>
            <person name="Corby N."/>
            <person name="Coville G.J."/>
            <person name="Davies J."/>
            <person name="Deadman R."/>
            <person name="Dunn M."/>
            <person name="Earthrowl M."/>
            <person name="Ellington A.G."/>
            <person name="Errington H."/>
            <person name="Frankish A."/>
            <person name="Frankland J."/>
            <person name="French L."/>
            <person name="Garner P."/>
            <person name="Garnett J."/>
            <person name="Gay L."/>
            <person name="Ghori M.R.J."/>
            <person name="Gibson R."/>
            <person name="Gilby L.M."/>
            <person name="Gillett W."/>
            <person name="Glithero R.J."/>
            <person name="Grafham D.V."/>
            <person name="Griffiths C."/>
            <person name="Griffiths-Jones S."/>
            <person name="Grocock R."/>
            <person name="Hammond S."/>
            <person name="Harrison E.S.I."/>
            <person name="Hart E."/>
            <person name="Haugen E."/>
            <person name="Heath P.D."/>
            <person name="Holmes S."/>
            <person name="Holt K."/>
            <person name="Howden P.J."/>
            <person name="Hunt A.R."/>
            <person name="Hunt S.E."/>
            <person name="Hunter G."/>
            <person name="Isherwood J."/>
            <person name="James R."/>
            <person name="Johnson C."/>
            <person name="Johnson D."/>
            <person name="Joy A."/>
            <person name="Kay M."/>
            <person name="Kershaw J.K."/>
            <person name="Kibukawa M."/>
            <person name="Kimberley A.M."/>
            <person name="King A."/>
            <person name="Knights A.J."/>
            <person name="Lad H."/>
            <person name="Laird G."/>
            <person name="Lawlor S."/>
            <person name="Leongamornlert D.A."/>
            <person name="Lloyd D.M."/>
            <person name="Loveland J."/>
            <person name="Lovell J."/>
            <person name="Lush M.J."/>
            <person name="Lyne R."/>
            <person name="Martin S."/>
            <person name="Mashreghi-Mohammadi M."/>
            <person name="Matthews L."/>
            <person name="Matthews N.S.W."/>
            <person name="McLaren S."/>
            <person name="Milne S."/>
            <person name="Mistry S."/>
            <person name="Moore M.J.F."/>
            <person name="Nickerson T."/>
            <person name="O'Dell C.N."/>
            <person name="Oliver K."/>
            <person name="Palmeiri A."/>
            <person name="Palmer S.A."/>
            <person name="Parker A."/>
            <person name="Patel D."/>
            <person name="Pearce A.V."/>
            <person name="Peck A.I."/>
            <person name="Pelan S."/>
            <person name="Phelps K."/>
            <person name="Phillimore B.J."/>
            <person name="Plumb R."/>
            <person name="Rajan J."/>
            <person name="Raymond C."/>
            <person name="Rouse G."/>
            <person name="Saenphimmachak C."/>
            <person name="Sehra H.K."/>
            <person name="Sheridan E."/>
            <person name="Shownkeen R."/>
            <person name="Sims S."/>
            <person name="Skuce C.D."/>
            <person name="Smith M."/>
            <person name="Steward C."/>
            <person name="Subramanian S."/>
            <person name="Sycamore N."/>
            <person name="Tracey A."/>
            <person name="Tromans A."/>
            <person name="Van Helmond Z."/>
            <person name="Wall M."/>
            <person name="Wallis J.M."/>
            <person name="White S."/>
            <person name="Whitehead S.L."/>
            <person name="Wilkinson J.E."/>
            <person name="Willey D.L."/>
            <person name="Williams H."/>
            <person name="Wilming L."/>
            <person name="Wray P.W."/>
            <person name="Wu Z."/>
            <person name="Coulson A."/>
            <person name="Vaudin M."/>
            <person name="Sulston J.E."/>
            <person name="Durbin R.M."/>
            <person name="Hubbard T."/>
            <person name="Wooster R."/>
            <person name="Dunham I."/>
            <person name="Carter N.P."/>
            <person name="McVean G."/>
            <person name="Ross M.T."/>
            <person name="Harrow J."/>
            <person name="Olson M.V."/>
            <person name="Beck S."/>
            <person name="Rogers J."/>
            <person name="Bentley D.R."/>
        </authorList>
    </citation>
    <scope>NUCLEOTIDE SEQUENCE [LARGE SCALE GENOMIC DNA]</scope>
</reference>
<reference key="10">
    <citation type="submission" date="2005-09" db="EMBL/GenBank/DDBJ databases">
        <authorList>
            <person name="Mural R.J."/>
            <person name="Istrail S."/>
            <person name="Sutton G.G."/>
            <person name="Florea L."/>
            <person name="Halpern A.L."/>
            <person name="Mobarry C.M."/>
            <person name="Lippert R."/>
            <person name="Walenz B."/>
            <person name="Shatkay H."/>
            <person name="Dew I."/>
            <person name="Miller J.R."/>
            <person name="Flanigan M.J."/>
            <person name="Edwards N.J."/>
            <person name="Bolanos R."/>
            <person name="Fasulo D."/>
            <person name="Halldorsson B.V."/>
            <person name="Hannenhalli S."/>
            <person name="Turner R."/>
            <person name="Yooseph S."/>
            <person name="Lu F."/>
            <person name="Nusskern D.R."/>
            <person name="Shue B.C."/>
            <person name="Zheng X.H."/>
            <person name="Zhong F."/>
            <person name="Delcher A.L."/>
            <person name="Huson D.H."/>
            <person name="Kravitz S.A."/>
            <person name="Mouchard L."/>
            <person name="Reinert K."/>
            <person name="Remington K.A."/>
            <person name="Clark A.G."/>
            <person name="Waterman M.S."/>
            <person name="Eichler E.E."/>
            <person name="Adams M.D."/>
            <person name="Hunkapiller M.W."/>
            <person name="Myers E.W."/>
            <person name="Venter J.C."/>
        </authorList>
    </citation>
    <scope>NUCLEOTIDE SEQUENCE [LARGE SCALE GENOMIC DNA]</scope>
</reference>
<reference key="11">
    <citation type="journal article" date="2004" name="Genome Res.">
        <title>The status, quality, and expansion of the NIH full-length cDNA project: the Mammalian Gene Collection (MGC).</title>
        <authorList>
            <consortium name="The MGC Project Team"/>
        </authorList>
    </citation>
    <scope>NUCLEOTIDE SEQUENCE [LARGE SCALE MRNA]</scope>
    <scope>VARIANT VAL-149</scope>
    <source>
        <tissue>Skeletal muscle</tissue>
    </source>
</reference>
<reference key="12">
    <citation type="journal article" date="1995" name="J. Invest. Dermatol.">
        <title>The pancornulins: a group of small proline rich-related cornified envelope precursors with bifunctional capabilities in isopeptide bond formation.</title>
        <authorList>
            <person name="Greco M.A."/>
            <person name="Lorand L."/>
            <person name="Lane W.S."/>
            <person name="Baden H.P."/>
            <person name="Parameswaran K.N.P."/>
            <person name="Kvedar J.C."/>
        </authorList>
    </citation>
    <scope>PROTEIN SEQUENCE OF 8-40 AND 140-165</scope>
    <source>
        <tissue>Keratinocyte</tissue>
    </source>
</reference>
<accession>Q9UBC9</accession>
<accession>A5YKK8</accession>
<accession>B2R4G8</accession>
<accession>D3DV32</accession>
<accession>O75597</accession>
<accession>Q4ZGI7</accession>
<accession>Q5T525</accession>
<accession>Q8NET7</accession>
<accession>Q9UDG3</accession>